<reference key="1">
    <citation type="journal article" date="2000" name="Nature">
        <title>The genome sequence of the plant pathogen Xylella fastidiosa.</title>
        <authorList>
            <person name="Simpson A.J.G."/>
            <person name="Reinach F.C."/>
            <person name="Arruda P."/>
            <person name="Abreu F.A."/>
            <person name="Acencio M."/>
            <person name="Alvarenga R."/>
            <person name="Alves L.M.C."/>
            <person name="Araya J.E."/>
            <person name="Baia G.S."/>
            <person name="Baptista C.S."/>
            <person name="Barros M.H."/>
            <person name="Bonaccorsi E.D."/>
            <person name="Bordin S."/>
            <person name="Bove J.M."/>
            <person name="Briones M.R.S."/>
            <person name="Bueno M.R.P."/>
            <person name="Camargo A.A."/>
            <person name="Camargo L.E.A."/>
            <person name="Carraro D.M."/>
            <person name="Carrer H."/>
            <person name="Colauto N.B."/>
            <person name="Colombo C."/>
            <person name="Costa F.F."/>
            <person name="Costa M.C.R."/>
            <person name="Costa-Neto C.M."/>
            <person name="Coutinho L.L."/>
            <person name="Cristofani M."/>
            <person name="Dias-Neto E."/>
            <person name="Docena C."/>
            <person name="El-Dorry H."/>
            <person name="Facincani A.P."/>
            <person name="Ferreira A.J.S."/>
            <person name="Ferreira V.C.A."/>
            <person name="Ferro J.A."/>
            <person name="Fraga J.S."/>
            <person name="Franca S.C."/>
            <person name="Franco M.C."/>
            <person name="Frohme M."/>
            <person name="Furlan L.R."/>
            <person name="Garnier M."/>
            <person name="Goldman G.H."/>
            <person name="Goldman M.H.S."/>
            <person name="Gomes S.L."/>
            <person name="Gruber A."/>
            <person name="Ho P.L."/>
            <person name="Hoheisel J.D."/>
            <person name="Junqueira M.L."/>
            <person name="Kemper E.L."/>
            <person name="Kitajima J.P."/>
            <person name="Krieger J.E."/>
            <person name="Kuramae E.E."/>
            <person name="Laigret F."/>
            <person name="Lambais M.R."/>
            <person name="Leite L.C.C."/>
            <person name="Lemos E.G.M."/>
            <person name="Lemos M.V.F."/>
            <person name="Lopes S.A."/>
            <person name="Lopes C.R."/>
            <person name="Machado J.A."/>
            <person name="Machado M.A."/>
            <person name="Madeira A.M.B.N."/>
            <person name="Madeira H.M.F."/>
            <person name="Marino C.L."/>
            <person name="Marques M.V."/>
            <person name="Martins E.A.L."/>
            <person name="Martins E.M.F."/>
            <person name="Matsukuma A.Y."/>
            <person name="Menck C.F.M."/>
            <person name="Miracca E.C."/>
            <person name="Miyaki C.Y."/>
            <person name="Monteiro-Vitorello C.B."/>
            <person name="Moon D.H."/>
            <person name="Nagai M.A."/>
            <person name="Nascimento A.L.T.O."/>
            <person name="Netto L.E.S."/>
            <person name="Nhani A. Jr."/>
            <person name="Nobrega F.G."/>
            <person name="Nunes L.R."/>
            <person name="Oliveira M.A."/>
            <person name="de Oliveira M.C."/>
            <person name="de Oliveira R.C."/>
            <person name="Palmieri D.A."/>
            <person name="Paris A."/>
            <person name="Peixoto B.R."/>
            <person name="Pereira G.A.G."/>
            <person name="Pereira H.A. Jr."/>
            <person name="Pesquero J.B."/>
            <person name="Quaggio R.B."/>
            <person name="Roberto P.G."/>
            <person name="Rodrigues V."/>
            <person name="de Rosa A.J.M."/>
            <person name="de Rosa V.E. Jr."/>
            <person name="de Sa R.G."/>
            <person name="Santelli R.V."/>
            <person name="Sawasaki H.E."/>
            <person name="da Silva A.C.R."/>
            <person name="da Silva A.M."/>
            <person name="da Silva F.R."/>
            <person name="Silva W.A. Jr."/>
            <person name="da Silveira J.F."/>
            <person name="Silvestri M.L.Z."/>
            <person name="Siqueira W.J."/>
            <person name="de Souza A.A."/>
            <person name="de Souza A.P."/>
            <person name="Terenzi M.F."/>
            <person name="Truffi D."/>
            <person name="Tsai S.M."/>
            <person name="Tsuhako M.H."/>
            <person name="Vallada H."/>
            <person name="Van Sluys M.A."/>
            <person name="Verjovski-Almeida S."/>
            <person name="Vettore A.L."/>
            <person name="Zago M.A."/>
            <person name="Zatz M."/>
            <person name="Meidanis J."/>
            <person name="Setubal J.C."/>
        </authorList>
    </citation>
    <scope>NUCLEOTIDE SEQUENCE [LARGE SCALE GENOMIC DNA]</scope>
    <source>
        <strain>9a5c</strain>
    </source>
</reference>
<gene>
    <name evidence="1" type="primary">ung</name>
    <name type="ordered locus">XF_2692</name>
</gene>
<accession>Q9PA28</accession>
<proteinExistence type="inferred from homology"/>
<organism>
    <name type="scientific">Xylella fastidiosa (strain 9a5c)</name>
    <dbReference type="NCBI Taxonomy" id="160492"/>
    <lineage>
        <taxon>Bacteria</taxon>
        <taxon>Pseudomonadati</taxon>
        <taxon>Pseudomonadota</taxon>
        <taxon>Gammaproteobacteria</taxon>
        <taxon>Lysobacterales</taxon>
        <taxon>Lysobacteraceae</taxon>
        <taxon>Xylella</taxon>
    </lineage>
</organism>
<feature type="chain" id="PRO_0000176168" description="Uracil-DNA glycosylase">
    <location>
        <begin position="1"/>
        <end position="253"/>
    </location>
</feature>
<feature type="active site" description="Proton acceptor" evidence="1">
    <location>
        <position position="79"/>
    </location>
</feature>
<dbReference type="EC" id="3.2.2.27" evidence="1"/>
<dbReference type="EMBL" id="AE003849">
    <property type="protein sequence ID" value="AAF85489.1"/>
    <property type="status" value="ALT_INIT"/>
    <property type="molecule type" value="Genomic_DNA"/>
</dbReference>
<dbReference type="PIR" id="H82525">
    <property type="entry name" value="H82525"/>
</dbReference>
<dbReference type="RefSeq" id="WP_010895106.1">
    <property type="nucleotide sequence ID" value="NC_002488.3"/>
</dbReference>
<dbReference type="SMR" id="Q9PA28"/>
<dbReference type="STRING" id="160492.XF_2692"/>
<dbReference type="KEGG" id="xfa:XF_2692"/>
<dbReference type="eggNOG" id="COG0692">
    <property type="taxonomic scope" value="Bacteria"/>
</dbReference>
<dbReference type="HOGENOM" id="CLU_032162_3_0_6"/>
<dbReference type="Proteomes" id="UP000000812">
    <property type="component" value="Chromosome"/>
</dbReference>
<dbReference type="GO" id="GO:0005737">
    <property type="term" value="C:cytoplasm"/>
    <property type="evidence" value="ECO:0007669"/>
    <property type="project" value="UniProtKB-SubCell"/>
</dbReference>
<dbReference type="GO" id="GO:0004844">
    <property type="term" value="F:uracil DNA N-glycosylase activity"/>
    <property type="evidence" value="ECO:0007669"/>
    <property type="project" value="UniProtKB-UniRule"/>
</dbReference>
<dbReference type="GO" id="GO:0097510">
    <property type="term" value="P:base-excision repair, AP site formation via deaminated base removal"/>
    <property type="evidence" value="ECO:0007669"/>
    <property type="project" value="TreeGrafter"/>
</dbReference>
<dbReference type="CDD" id="cd10027">
    <property type="entry name" value="UDG-F1-like"/>
    <property type="match status" value="1"/>
</dbReference>
<dbReference type="FunFam" id="3.40.470.10:FF:000001">
    <property type="entry name" value="Uracil-DNA glycosylase"/>
    <property type="match status" value="1"/>
</dbReference>
<dbReference type="Gene3D" id="3.40.470.10">
    <property type="entry name" value="Uracil-DNA glycosylase-like domain"/>
    <property type="match status" value="1"/>
</dbReference>
<dbReference type="HAMAP" id="MF_00148">
    <property type="entry name" value="UDG"/>
    <property type="match status" value="1"/>
</dbReference>
<dbReference type="InterPro" id="IPR002043">
    <property type="entry name" value="UDG_fam1"/>
</dbReference>
<dbReference type="InterPro" id="IPR018085">
    <property type="entry name" value="Ura-DNA_Glyclase_AS"/>
</dbReference>
<dbReference type="InterPro" id="IPR005122">
    <property type="entry name" value="Uracil-DNA_glycosylase-like"/>
</dbReference>
<dbReference type="InterPro" id="IPR036895">
    <property type="entry name" value="Uracil-DNA_glycosylase-like_sf"/>
</dbReference>
<dbReference type="NCBIfam" id="NF003588">
    <property type="entry name" value="PRK05254.1-1"/>
    <property type="match status" value="1"/>
</dbReference>
<dbReference type="NCBIfam" id="NF003589">
    <property type="entry name" value="PRK05254.1-2"/>
    <property type="match status" value="1"/>
</dbReference>
<dbReference type="NCBIfam" id="NF003591">
    <property type="entry name" value="PRK05254.1-4"/>
    <property type="match status" value="1"/>
</dbReference>
<dbReference type="NCBIfam" id="NF003592">
    <property type="entry name" value="PRK05254.1-5"/>
    <property type="match status" value="1"/>
</dbReference>
<dbReference type="NCBIfam" id="TIGR00628">
    <property type="entry name" value="ung"/>
    <property type="match status" value="1"/>
</dbReference>
<dbReference type="PANTHER" id="PTHR11264">
    <property type="entry name" value="URACIL-DNA GLYCOSYLASE"/>
    <property type="match status" value="1"/>
</dbReference>
<dbReference type="PANTHER" id="PTHR11264:SF0">
    <property type="entry name" value="URACIL-DNA GLYCOSYLASE"/>
    <property type="match status" value="1"/>
</dbReference>
<dbReference type="Pfam" id="PF03167">
    <property type="entry name" value="UDG"/>
    <property type="match status" value="1"/>
</dbReference>
<dbReference type="SMART" id="SM00986">
    <property type="entry name" value="UDG"/>
    <property type="match status" value="1"/>
</dbReference>
<dbReference type="SMART" id="SM00987">
    <property type="entry name" value="UreE_C"/>
    <property type="match status" value="1"/>
</dbReference>
<dbReference type="SUPFAM" id="SSF52141">
    <property type="entry name" value="Uracil-DNA glycosylase-like"/>
    <property type="match status" value="1"/>
</dbReference>
<dbReference type="PROSITE" id="PS00130">
    <property type="entry name" value="U_DNA_GLYCOSYLASE"/>
    <property type="match status" value="1"/>
</dbReference>
<protein>
    <recommendedName>
        <fullName evidence="1">Uracil-DNA glycosylase</fullName>
        <shortName evidence="1">UDG</shortName>
        <ecNumber evidence="1">3.2.2.27</ecNumber>
    </recommendedName>
</protein>
<keyword id="KW-0963">Cytoplasm</keyword>
<keyword id="KW-0227">DNA damage</keyword>
<keyword id="KW-0234">DNA repair</keyword>
<keyword id="KW-0378">Hydrolase</keyword>
<sequence>MNEQGEAINNSAESRIQLESSWKAHVGNWLLRPEMRDLSAFLRARKVAGVSVYPPGSQIFAAFEATPFQRVKAVILGQDPYHGQGQAHGLCFSVRPGMPLPPSLLNIYKELEEDLGLLRPDHGCLLPWAKRGVLLLNAVLTVEDGRAGAHQGKGWEGFTDHVVDTLNREREGLVFMLWGSYAQAKGKVIDTRRHLVLKAAHPSPLSAHRGFLGCRHFSLCNQYLSQHGLGMVDWSLPPCIALDGAILNGRIAV</sequence>
<evidence type="ECO:0000255" key="1">
    <source>
        <dbReference type="HAMAP-Rule" id="MF_00148"/>
    </source>
</evidence>
<evidence type="ECO:0000305" key="2"/>
<comment type="function">
    <text evidence="1">Excises uracil residues from the DNA which can arise as a result of misincorporation of dUMP residues by DNA polymerase or due to deamination of cytosine.</text>
</comment>
<comment type="catalytic activity">
    <reaction evidence="1">
        <text>Hydrolyzes single-stranded DNA or mismatched double-stranded DNA and polynucleotides, releasing free uracil.</text>
        <dbReference type="EC" id="3.2.2.27"/>
    </reaction>
</comment>
<comment type="subcellular location">
    <subcellularLocation>
        <location evidence="1">Cytoplasm</location>
    </subcellularLocation>
</comment>
<comment type="similarity">
    <text evidence="1">Belongs to the uracil-DNA glycosylase (UDG) superfamily. UNG family.</text>
</comment>
<comment type="sequence caution" evidence="2">
    <conflict type="erroneous initiation">
        <sequence resource="EMBL-CDS" id="AAF85489"/>
    </conflict>
</comment>
<name>UNG_XYLFA</name>